<evidence type="ECO:0000255" key="1">
    <source>
        <dbReference type="HAMAP-Rule" id="MF_01147"/>
    </source>
</evidence>
<comment type="function">
    <text evidence="1">Catalyzes the transfer of the diacylglyceryl group from phosphatidylglycerol to the sulfhydryl group of the N-terminal cysteine of a prolipoprotein, the first step in the formation of mature lipoproteins.</text>
</comment>
<comment type="catalytic activity">
    <reaction evidence="1">
        <text>L-cysteinyl-[prolipoprotein] + a 1,2-diacyl-sn-glycero-3-phospho-(1'-sn-glycerol) = an S-1,2-diacyl-sn-glyceryl-L-cysteinyl-[prolipoprotein] + sn-glycerol 1-phosphate + H(+)</text>
        <dbReference type="Rhea" id="RHEA:56712"/>
        <dbReference type="Rhea" id="RHEA-COMP:14679"/>
        <dbReference type="Rhea" id="RHEA-COMP:14680"/>
        <dbReference type="ChEBI" id="CHEBI:15378"/>
        <dbReference type="ChEBI" id="CHEBI:29950"/>
        <dbReference type="ChEBI" id="CHEBI:57685"/>
        <dbReference type="ChEBI" id="CHEBI:64716"/>
        <dbReference type="ChEBI" id="CHEBI:140658"/>
        <dbReference type="EC" id="2.5.1.145"/>
    </reaction>
</comment>
<comment type="pathway">
    <text evidence="1">Protein modification; lipoprotein biosynthesis (diacylglyceryl transfer).</text>
</comment>
<comment type="subcellular location">
    <subcellularLocation>
        <location evidence="1">Cell inner membrane</location>
        <topology evidence="1">Multi-pass membrane protein</topology>
    </subcellularLocation>
</comment>
<comment type="similarity">
    <text evidence="1">Belongs to the Lgt family.</text>
</comment>
<dbReference type="EC" id="2.5.1.145" evidence="1"/>
<dbReference type="EMBL" id="CP000668">
    <property type="protein sequence ID" value="ABP40088.1"/>
    <property type="molecule type" value="Genomic_DNA"/>
</dbReference>
<dbReference type="RefSeq" id="WP_002211383.1">
    <property type="nucleotide sequence ID" value="NZ_CP009715.1"/>
</dbReference>
<dbReference type="SMR" id="A4TLC6"/>
<dbReference type="GeneID" id="57973850"/>
<dbReference type="KEGG" id="ypp:YPDSF_1703"/>
<dbReference type="PATRIC" id="fig|386656.14.peg.2058"/>
<dbReference type="UniPathway" id="UPA00664"/>
<dbReference type="GO" id="GO:0005886">
    <property type="term" value="C:plasma membrane"/>
    <property type="evidence" value="ECO:0007669"/>
    <property type="project" value="UniProtKB-SubCell"/>
</dbReference>
<dbReference type="GO" id="GO:0008961">
    <property type="term" value="F:phosphatidylglycerol-prolipoprotein diacylglyceryl transferase activity"/>
    <property type="evidence" value="ECO:0007669"/>
    <property type="project" value="UniProtKB-UniRule"/>
</dbReference>
<dbReference type="GO" id="GO:0042158">
    <property type="term" value="P:lipoprotein biosynthetic process"/>
    <property type="evidence" value="ECO:0007669"/>
    <property type="project" value="UniProtKB-UniRule"/>
</dbReference>
<dbReference type="HAMAP" id="MF_01147">
    <property type="entry name" value="Lgt"/>
    <property type="match status" value="1"/>
</dbReference>
<dbReference type="InterPro" id="IPR001640">
    <property type="entry name" value="Lgt"/>
</dbReference>
<dbReference type="NCBIfam" id="TIGR00544">
    <property type="entry name" value="lgt"/>
    <property type="match status" value="1"/>
</dbReference>
<dbReference type="PANTHER" id="PTHR30589:SF0">
    <property type="entry name" value="PHOSPHATIDYLGLYCEROL--PROLIPOPROTEIN DIACYLGLYCERYL TRANSFERASE"/>
    <property type="match status" value="1"/>
</dbReference>
<dbReference type="PANTHER" id="PTHR30589">
    <property type="entry name" value="PROLIPOPROTEIN DIACYLGLYCERYL TRANSFERASE"/>
    <property type="match status" value="1"/>
</dbReference>
<dbReference type="Pfam" id="PF01790">
    <property type="entry name" value="LGT"/>
    <property type="match status" value="1"/>
</dbReference>
<dbReference type="PROSITE" id="PS01311">
    <property type="entry name" value="LGT"/>
    <property type="match status" value="1"/>
</dbReference>
<proteinExistence type="inferred from homology"/>
<name>LGT_YERPP</name>
<reference key="1">
    <citation type="submission" date="2007-02" db="EMBL/GenBank/DDBJ databases">
        <title>Complete sequence of chromosome of Yersinia pestis Pestoides F.</title>
        <authorList>
            <consortium name="US DOE Joint Genome Institute"/>
            <person name="Copeland A."/>
            <person name="Lucas S."/>
            <person name="Lapidus A."/>
            <person name="Barry K."/>
            <person name="Detter J.C."/>
            <person name="Glavina del Rio T."/>
            <person name="Hammon N."/>
            <person name="Israni S."/>
            <person name="Dalin E."/>
            <person name="Tice H."/>
            <person name="Pitluck S."/>
            <person name="Di Bartolo G."/>
            <person name="Chain P."/>
            <person name="Malfatti S."/>
            <person name="Shin M."/>
            <person name="Vergez L."/>
            <person name="Schmutz J."/>
            <person name="Larimer F."/>
            <person name="Land M."/>
            <person name="Hauser L."/>
            <person name="Worsham P."/>
            <person name="Chu M."/>
            <person name="Bearden S."/>
            <person name="Garcia E."/>
            <person name="Richardson P."/>
        </authorList>
    </citation>
    <scope>NUCLEOTIDE SEQUENCE [LARGE SCALE GENOMIC DNA]</scope>
    <source>
        <strain>Pestoides F</strain>
    </source>
</reference>
<sequence length="290" mass="32809">MSNSYLAFPKFDPVIFSIGPVSLHWYGLMYLVGFVFAMWLAVRRANKPGSGWTKEEVENLLYAGFLGVFIGGRVGYVLFYNLPMFLDNPLYLFKVWDGGMSFHGGLIGVICVMLWFARRTKRNFFQVADFIAPLIPFGLGAGRLGNFINAELWGRVTTDTPWAMLFPTSRNTDIAIVAADPAKWQAIFNQYGVLPRHPSQLYEMILEGVVLFIILNVFIRKPRPMGSVSGLFLIGYGTFRIIVECFRQPDEQLGLFEGMISMGQILSVPMILAGIIMMIWAYRRPTQKLS</sequence>
<accession>A4TLC6</accession>
<organism>
    <name type="scientific">Yersinia pestis (strain Pestoides F)</name>
    <dbReference type="NCBI Taxonomy" id="386656"/>
    <lineage>
        <taxon>Bacteria</taxon>
        <taxon>Pseudomonadati</taxon>
        <taxon>Pseudomonadota</taxon>
        <taxon>Gammaproteobacteria</taxon>
        <taxon>Enterobacterales</taxon>
        <taxon>Yersiniaceae</taxon>
        <taxon>Yersinia</taxon>
    </lineage>
</organism>
<feature type="chain" id="PRO_1000053532" description="Phosphatidylglycerol--prolipoprotein diacylglyceryl transferase">
    <location>
        <begin position="1"/>
        <end position="290"/>
    </location>
</feature>
<feature type="transmembrane region" description="Helical" evidence="1">
    <location>
        <begin position="21"/>
        <end position="41"/>
    </location>
</feature>
<feature type="transmembrane region" description="Helical" evidence="1">
    <location>
        <begin position="60"/>
        <end position="80"/>
    </location>
</feature>
<feature type="transmembrane region" description="Helical" evidence="1">
    <location>
        <begin position="96"/>
        <end position="116"/>
    </location>
</feature>
<feature type="transmembrane region" description="Helical" evidence="1">
    <location>
        <begin position="124"/>
        <end position="144"/>
    </location>
</feature>
<feature type="transmembrane region" description="Helical" evidence="1">
    <location>
        <begin position="199"/>
        <end position="219"/>
    </location>
</feature>
<feature type="transmembrane region" description="Helical" evidence="1">
    <location>
        <begin position="226"/>
        <end position="246"/>
    </location>
</feature>
<feature type="transmembrane region" description="Helical" evidence="1">
    <location>
        <begin position="260"/>
        <end position="280"/>
    </location>
</feature>
<feature type="binding site" evidence="1">
    <location>
        <position position="143"/>
    </location>
    <ligand>
        <name>a 1,2-diacyl-sn-glycero-3-phospho-(1'-sn-glycerol)</name>
        <dbReference type="ChEBI" id="CHEBI:64716"/>
    </ligand>
</feature>
<gene>
    <name evidence="1" type="primary">lgt</name>
    <name type="ordered locus">YPDSF_1703</name>
</gene>
<keyword id="KW-0997">Cell inner membrane</keyword>
<keyword id="KW-1003">Cell membrane</keyword>
<keyword id="KW-0472">Membrane</keyword>
<keyword id="KW-0808">Transferase</keyword>
<keyword id="KW-0812">Transmembrane</keyword>
<keyword id="KW-1133">Transmembrane helix</keyword>
<protein>
    <recommendedName>
        <fullName evidence="1">Phosphatidylglycerol--prolipoprotein diacylglyceryl transferase</fullName>
        <ecNumber evidence="1">2.5.1.145</ecNumber>
    </recommendedName>
</protein>